<sequence length="742" mass="85965">MAKKDSVLEAGWSVMEAGVAKLQKILEEVPDEPPFDPVQRMQLYTTVHNLCTQKPPNDYSQQIYDRYGGVYVDYNKQTVLPAIREKHGEYMLRELVKRWANQKILVRWLSHFFEYLDRFYTRRGSHPTLSAVGFISFRDLVYQELQSKAKDAVLALIHKEREGEQIDRALLKNVIDVYCGNGMGELVKYEEDFESFLLEDSASYYSRNASRWNQENSCPDYMIKAEESLRLEKERVTNYLHSTTEPKLVAKVQNELLVVVAKQLIENEHSGCRALLRDDKMDDLARMYRLYHPIPQGLDPVADLFKQHITVEGSALIKQATEAATDKAASTSGLKVQDQVLIRQLIDLHDKFMVYVDECFQKHSLFHKALKEAFEVFCNKTVAGVSSAEILATYCDNILKTGGGIEKLENEDLELTLEKVVKLLVYISDKDLFAEFFRKKQARRLLFDRNGNDYHERSLLTKFKELLGAQFTSKMEGMLTDMTLAKEHQTNFVEFLSVNKTKKLGMDFTVTVLTTGFWPSYKTTDLNLPIEMVNCVEAFKAYYGTKTNSRRLSWIYSLGTCQLAGKFDKKTIEIVVTTYQAAVLLLFNNTERLSYTEILEQLNLGHEDLARLLHSLSCLKYKILIKEPMSRNISNTDTFEFNSKFTDKMRRIRVPLPPMDERKKIVEDVDKDRRYAIDAALVRIMKSRKVLGHQQLVSECVEHLSKMFKPDIKMIKKRIEDLISRDYLERDTDNPNTFKYLA</sequence>
<evidence type="ECO:0000250" key="1"/>
<evidence type="ECO:0000250" key="2">
    <source>
        <dbReference type="UniProtKB" id="Q13616"/>
    </source>
</evidence>
<evidence type="ECO:0000250" key="3">
    <source>
        <dbReference type="UniProtKB" id="Q13617"/>
    </source>
</evidence>
<evidence type="ECO:0000250" key="4">
    <source>
        <dbReference type="UniProtKB" id="Q9D4H8"/>
    </source>
</evidence>
<evidence type="ECO:0000255" key="5"/>
<evidence type="ECO:0000255" key="6">
    <source>
        <dbReference type="PROSITE-ProRule" id="PRU00330"/>
    </source>
</evidence>
<evidence type="ECO:0000269" key="7">
    <source>
    </source>
</evidence>
<name>CUL2_ARATH</name>
<proteinExistence type="evidence at protein level"/>
<reference key="1">
    <citation type="journal article" date="2000" name="Nature">
        <title>Sequence and analysis of chromosome 1 of the plant Arabidopsis thaliana.</title>
        <authorList>
            <person name="Theologis A."/>
            <person name="Ecker J.R."/>
            <person name="Palm C.J."/>
            <person name="Federspiel N.A."/>
            <person name="Kaul S."/>
            <person name="White O."/>
            <person name="Alonso J."/>
            <person name="Altafi H."/>
            <person name="Araujo R."/>
            <person name="Bowman C.L."/>
            <person name="Brooks S.Y."/>
            <person name="Buehler E."/>
            <person name="Chan A."/>
            <person name="Chao Q."/>
            <person name="Chen H."/>
            <person name="Cheuk R.F."/>
            <person name="Chin C.W."/>
            <person name="Chung M.K."/>
            <person name="Conn L."/>
            <person name="Conway A.B."/>
            <person name="Conway A.R."/>
            <person name="Creasy T.H."/>
            <person name="Dewar K."/>
            <person name="Dunn P."/>
            <person name="Etgu P."/>
            <person name="Feldblyum T.V."/>
            <person name="Feng J.-D."/>
            <person name="Fong B."/>
            <person name="Fujii C.Y."/>
            <person name="Gill J.E."/>
            <person name="Goldsmith A.D."/>
            <person name="Haas B."/>
            <person name="Hansen N.F."/>
            <person name="Hughes B."/>
            <person name="Huizar L."/>
            <person name="Hunter J.L."/>
            <person name="Jenkins J."/>
            <person name="Johnson-Hopson C."/>
            <person name="Khan S."/>
            <person name="Khaykin E."/>
            <person name="Kim C.J."/>
            <person name="Koo H.L."/>
            <person name="Kremenetskaia I."/>
            <person name="Kurtz D.B."/>
            <person name="Kwan A."/>
            <person name="Lam B."/>
            <person name="Langin-Hooper S."/>
            <person name="Lee A."/>
            <person name="Lee J.M."/>
            <person name="Lenz C.A."/>
            <person name="Li J.H."/>
            <person name="Li Y.-P."/>
            <person name="Lin X."/>
            <person name="Liu S.X."/>
            <person name="Liu Z.A."/>
            <person name="Luros J.S."/>
            <person name="Maiti R."/>
            <person name="Marziali A."/>
            <person name="Militscher J."/>
            <person name="Miranda M."/>
            <person name="Nguyen M."/>
            <person name="Nierman W.C."/>
            <person name="Osborne B.I."/>
            <person name="Pai G."/>
            <person name="Peterson J."/>
            <person name="Pham P.K."/>
            <person name="Rizzo M."/>
            <person name="Rooney T."/>
            <person name="Rowley D."/>
            <person name="Sakano H."/>
            <person name="Salzberg S.L."/>
            <person name="Schwartz J.R."/>
            <person name="Shinn P."/>
            <person name="Southwick A.M."/>
            <person name="Sun H."/>
            <person name="Tallon L.J."/>
            <person name="Tambunga G."/>
            <person name="Toriumi M.J."/>
            <person name="Town C.D."/>
            <person name="Utterback T."/>
            <person name="Van Aken S."/>
            <person name="Vaysberg M."/>
            <person name="Vysotskaia V.S."/>
            <person name="Walker M."/>
            <person name="Wu D."/>
            <person name="Yu G."/>
            <person name="Fraser C.M."/>
            <person name="Venter J.C."/>
            <person name="Davis R.W."/>
        </authorList>
    </citation>
    <scope>NUCLEOTIDE SEQUENCE [LARGE SCALE GENOMIC DNA]</scope>
    <source>
        <strain>cv. Columbia</strain>
    </source>
</reference>
<reference key="2">
    <citation type="journal article" date="2017" name="Plant J.">
        <title>Araport11: a complete reannotation of the Arabidopsis thaliana reference genome.</title>
        <authorList>
            <person name="Cheng C.Y."/>
            <person name="Krishnakumar V."/>
            <person name="Chan A.P."/>
            <person name="Thibaud-Nissen F."/>
            <person name="Schobel S."/>
            <person name="Town C.D."/>
        </authorList>
    </citation>
    <scope>GENOME REANNOTATION</scope>
    <source>
        <strain>cv. Columbia</strain>
    </source>
</reference>
<reference key="3">
    <citation type="journal article" date="2002" name="Science">
        <title>Functional annotation of a full-length Arabidopsis cDNA collection.</title>
        <authorList>
            <person name="Seki M."/>
            <person name="Narusaka M."/>
            <person name="Kamiya A."/>
            <person name="Ishida J."/>
            <person name="Satou M."/>
            <person name="Sakurai T."/>
            <person name="Nakajima M."/>
            <person name="Enju A."/>
            <person name="Akiyama K."/>
            <person name="Oono Y."/>
            <person name="Muramatsu M."/>
            <person name="Hayashizaki Y."/>
            <person name="Kawai J."/>
            <person name="Carninci P."/>
            <person name="Itoh M."/>
            <person name="Ishii Y."/>
            <person name="Arakawa T."/>
            <person name="Shibata K."/>
            <person name="Shinagawa A."/>
            <person name="Shinozaki K."/>
        </authorList>
    </citation>
    <scope>NUCLEOTIDE SEQUENCE [LARGE SCALE MRNA] OF 417-742</scope>
    <source>
        <strain>cv. Columbia</strain>
    </source>
</reference>
<reference key="4">
    <citation type="journal article" date="2003" name="Science">
        <title>Empirical analysis of transcriptional activity in the Arabidopsis genome.</title>
        <authorList>
            <person name="Yamada K."/>
            <person name="Lim J."/>
            <person name="Dale J.M."/>
            <person name="Chen H."/>
            <person name="Shinn P."/>
            <person name="Palm C.J."/>
            <person name="Southwick A.M."/>
            <person name="Wu H.C."/>
            <person name="Kim C.J."/>
            <person name="Nguyen M."/>
            <person name="Pham P.K."/>
            <person name="Cheuk R.F."/>
            <person name="Karlin-Newmann G."/>
            <person name="Liu S.X."/>
            <person name="Lam B."/>
            <person name="Sakano H."/>
            <person name="Wu T."/>
            <person name="Yu G."/>
            <person name="Miranda M."/>
            <person name="Quach H.L."/>
            <person name="Tripp M."/>
            <person name="Chang C.H."/>
            <person name="Lee J.M."/>
            <person name="Toriumi M.J."/>
            <person name="Chan M.M."/>
            <person name="Tang C.C."/>
            <person name="Onodera C.S."/>
            <person name="Deng J.M."/>
            <person name="Akiyama K."/>
            <person name="Ansari Y."/>
            <person name="Arakawa T."/>
            <person name="Banh J."/>
            <person name="Banno F."/>
            <person name="Bowser L."/>
            <person name="Brooks S.Y."/>
            <person name="Carninci P."/>
            <person name="Chao Q."/>
            <person name="Choy N."/>
            <person name="Enju A."/>
            <person name="Goldsmith A.D."/>
            <person name="Gurjal M."/>
            <person name="Hansen N.F."/>
            <person name="Hayashizaki Y."/>
            <person name="Johnson-Hopson C."/>
            <person name="Hsuan V.W."/>
            <person name="Iida K."/>
            <person name="Karnes M."/>
            <person name="Khan S."/>
            <person name="Koesema E."/>
            <person name="Ishida J."/>
            <person name="Jiang P.X."/>
            <person name="Jones T."/>
            <person name="Kawai J."/>
            <person name="Kamiya A."/>
            <person name="Meyers C."/>
            <person name="Nakajima M."/>
            <person name="Narusaka M."/>
            <person name="Seki M."/>
            <person name="Sakurai T."/>
            <person name="Satou M."/>
            <person name="Tamse R."/>
            <person name="Vaysberg M."/>
            <person name="Wallender E.K."/>
            <person name="Wong C."/>
            <person name="Yamamura Y."/>
            <person name="Yuan S."/>
            <person name="Shinozaki K."/>
            <person name="Davis R.W."/>
            <person name="Theologis A."/>
            <person name="Ecker J.R."/>
        </authorList>
    </citation>
    <scope>NUCLEOTIDE SEQUENCE [LARGE SCALE MRNA] OF 475-742</scope>
    <source>
        <strain>cv. Columbia</strain>
    </source>
</reference>
<reference key="5">
    <citation type="journal article" date="2003" name="Plant J.">
        <title>Protein interaction analysis of SCF ubiquitin E3 ligase subunits from Arabidopsis.</title>
        <authorList>
            <person name="Risseeuw E.P."/>
            <person name="Daskalchuk T.E."/>
            <person name="Banks T.W."/>
            <person name="Liu E."/>
            <person name="Cotelesage J."/>
            <person name="Hellmann H."/>
            <person name="Estelle M."/>
            <person name="Somers D.E."/>
            <person name="Crosby W.L."/>
        </authorList>
    </citation>
    <scope>INTERACTION WITH SKIP17 AND SKIP18</scope>
</reference>
<keyword id="KW-1017">Isopeptide bond</keyword>
<keyword id="KW-1185">Reference proteome</keyword>
<keyword id="KW-0832">Ubl conjugation</keyword>
<keyword id="KW-0833">Ubl conjugation pathway</keyword>
<accession>Q9SRZ0</accession>
<accession>Q8GY26</accession>
<comment type="function">
    <text evidence="1">Core component of multiple SCF (SKP1-CUL1-F-box protein) E3 ubiquitin-protein ligase complexes. Involved in ubiquitination and subsequent proteasomal degradation of target proteins (By similarity).</text>
</comment>
<comment type="subunit">
    <text evidence="7">Interacts with SKIP17 and FBW2/SKIP18.</text>
</comment>
<comment type="PTM">
    <text evidence="3 4">Neddylated; which enhances the ubiquitination activity of E3 ubiquitin-protein ligase complexes.</text>
</comment>
<comment type="similarity">
    <text evidence="6">Belongs to the cullin family.</text>
</comment>
<protein>
    <recommendedName>
        <fullName>Cullin-2</fullName>
        <shortName>AtCUL1</shortName>
    </recommendedName>
</protein>
<feature type="chain" id="PRO_0000396848" description="Cullin-2">
    <location>
        <begin position="1"/>
        <end position="742"/>
    </location>
</feature>
<feature type="domain" description="Cullin neddylation" evidence="5">
    <location>
        <begin position="672"/>
        <end position="734"/>
    </location>
</feature>
<feature type="cross-link" description="Glycyl lysine isopeptide (Lys-Gly) (interchain with G-Cter in NEDD8)" evidence="2">
    <location>
        <position position="686"/>
    </location>
</feature>
<organism>
    <name type="scientific">Arabidopsis thaliana</name>
    <name type="common">Mouse-ear cress</name>
    <dbReference type="NCBI Taxonomy" id="3702"/>
    <lineage>
        <taxon>Eukaryota</taxon>
        <taxon>Viridiplantae</taxon>
        <taxon>Streptophyta</taxon>
        <taxon>Embryophyta</taxon>
        <taxon>Tracheophyta</taxon>
        <taxon>Spermatophyta</taxon>
        <taxon>Magnoliopsida</taxon>
        <taxon>eudicotyledons</taxon>
        <taxon>Gunneridae</taxon>
        <taxon>Pentapetalae</taxon>
        <taxon>rosids</taxon>
        <taxon>malvids</taxon>
        <taxon>Brassicales</taxon>
        <taxon>Brassicaceae</taxon>
        <taxon>Camelineae</taxon>
        <taxon>Arabidopsis</taxon>
    </lineage>
</organism>
<dbReference type="EMBL" id="AC009525">
    <property type="protein sequence ID" value="AAF02868.1"/>
    <property type="molecule type" value="Genomic_DNA"/>
</dbReference>
<dbReference type="EMBL" id="CP002684">
    <property type="protein sequence ID" value="AEE27509.1"/>
    <property type="molecule type" value="Genomic_DNA"/>
</dbReference>
<dbReference type="EMBL" id="CP002684">
    <property type="protein sequence ID" value="ANM59352.1"/>
    <property type="molecule type" value="Genomic_DNA"/>
</dbReference>
<dbReference type="EMBL" id="AK117909">
    <property type="protein sequence ID" value="BAC42547.1"/>
    <property type="molecule type" value="mRNA"/>
</dbReference>
<dbReference type="EMBL" id="BT006231">
    <property type="protein sequence ID" value="AAP12880.1"/>
    <property type="molecule type" value="mRNA"/>
</dbReference>
<dbReference type="PIR" id="D86160">
    <property type="entry name" value="D86160"/>
</dbReference>
<dbReference type="RefSeq" id="NP_001318910.1">
    <property type="nucleotide sequence ID" value="NM_001331372.1"/>
</dbReference>
<dbReference type="RefSeq" id="NP_171797.2">
    <property type="nucleotide sequence ID" value="NM_100179.4"/>
</dbReference>
<dbReference type="SMR" id="Q9SRZ0"/>
<dbReference type="BioGRID" id="24650">
    <property type="interactions" value="2"/>
</dbReference>
<dbReference type="ComplexPortal" id="CPX-1471">
    <property type="entry name" value="SCF(COI1) ubiquitin ligase complex, variant CUL2-RBX1A-SKP1A"/>
</dbReference>
<dbReference type="ComplexPortal" id="CPX-1472">
    <property type="entry name" value="SCF(COI1) ubiquitin ligase complex, variant CUL2-RBX1A-SKP1B"/>
</dbReference>
<dbReference type="ComplexPortal" id="CPX-1473">
    <property type="entry name" value="SCF(COI1) ubiquitin ligase complex, variant CUL2-RBX1A-ASK3"/>
</dbReference>
<dbReference type="ComplexPortal" id="CPX-1474">
    <property type="entry name" value="SCF(COI1) ubiquitin ligase complex, variant CUL2-RBX1A-ASK4"/>
</dbReference>
<dbReference type="ComplexPortal" id="CPX-1475">
    <property type="entry name" value="SCF(COI1) ubiquitin ligase complex, variant CUL2-RBX1A-ASK5"/>
</dbReference>
<dbReference type="ComplexPortal" id="CPX-1476">
    <property type="entry name" value="SCF(COI1) ubiquitin ligase complex, variant CUL2-RBX1A-ASK6"/>
</dbReference>
<dbReference type="ComplexPortal" id="CPX-1477">
    <property type="entry name" value="SCF(COI1) ubiquitin ligase complex, variant CUL2-RBX1A-ASK7"/>
</dbReference>
<dbReference type="ComplexPortal" id="CPX-1478">
    <property type="entry name" value="SCF(COI1) ubiquitin ligase complex, variant CUL2-RBX1A-ASK8"/>
</dbReference>
<dbReference type="ComplexPortal" id="CPX-1479">
    <property type="entry name" value="SCF(COI1) ubiquitin ligase complex, variant CUL2-RBX1A-ASK9"/>
</dbReference>
<dbReference type="ComplexPortal" id="CPX-1480">
    <property type="entry name" value="SCF(COI1) ubiquitin ligase complex, variant CUL2-RBX1A-ASK10"/>
</dbReference>
<dbReference type="ComplexPortal" id="CPX-1481">
    <property type="entry name" value="SCF(COI1) ubiquitin ligase complex, variant CUL2-RBX1A-ASK11"/>
</dbReference>
<dbReference type="ComplexPortal" id="CPX-1482">
    <property type="entry name" value="SCF(COI1) ubiquitin ligase complex, variant CUL2-RBX1A-ASK12"/>
</dbReference>
<dbReference type="ComplexPortal" id="CPX-1483">
    <property type="entry name" value="SCF(COI1) ubiquitin ligase complex, variant CUL2-RBX1A-ASK13"/>
</dbReference>
<dbReference type="ComplexPortal" id="CPX-1484">
    <property type="entry name" value="SCF(COI1) ubiquitin ligase complex, variant CUL2-RBX1A-ASK14"/>
</dbReference>
<dbReference type="ComplexPortal" id="CPX-1485">
    <property type="entry name" value="SCF(COI1) ubiquitin ligase complex, variant CUL2-RBX1A-ASK15"/>
</dbReference>
<dbReference type="ComplexPortal" id="CPX-1486">
    <property type="entry name" value="SCF(COI1) ubiquitin ligase complex, variant CUL2-RBX1A-ASK16"/>
</dbReference>
<dbReference type="ComplexPortal" id="CPX-1487">
    <property type="entry name" value="SCF(COI1) ubiquitin ligase complex, variant CUL2-RBX1A-ASK17"/>
</dbReference>
<dbReference type="ComplexPortal" id="CPX-1488">
    <property type="entry name" value="SCF(COI1) ubiquitin ligase complex, variant CUL2-RBX1A-ASK18"/>
</dbReference>
<dbReference type="ComplexPortal" id="CPX-1489">
    <property type="entry name" value="SCF(COI1) ubiquitin ligase complex, variant CUL2-RBX1A-ASK19"/>
</dbReference>
<dbReference type="ComplexPortal" id="CPX-1490">
    <property type="entry name" value="SCF(COI1) ubiquitin ligase complex, variant CUL2-RBX1A-ASK20"/>
</dbReference>
<dbReference type="ComplexPortal" id="CPX-1491">
    <property type="entry name" value="SCF(COI1) ubiquitin ligase complex, variant CUL2-RBX1A-ASK21"/>
</dbReference>
<dbReference type="ComplexPortal" id="CPX-1492">
    <property type="entry name" value="SCF(COI1) ubiquitin ligase complex, variant CUL2-RBX1B-SKP1A"/>
</dbReference>
<dbReference type="ComplexPortal" id="CPX-1493">
    <property type="entry name" value="SCF(COI1) ubiquitin ligase complex, variant CUL2-RBX1B-SKP1B"/>
</dbReference>
<dbReference type="ComplexPortal" id="CPX-1494">
    <property type="entry name" value="SCF(COI1) ubiquitin ligase complex, variant CUL2-RBX1B-ASK3"/>
</dbReference>
<dbReference type="ComplexPortal" id="CPX-1495">
    <property type="entry name" value="SCF(COI1) ubiquitin ligase complex, variant CUL2-RBX1B-ASK4"/>
</dbReference>
<dbReference type="ComplexPortal" id="CPX-1496">
    <property type="entry name" value="SCF(COI1) ubiquitin ligase complex, variant CUL2-RBX1B-ASK5"/>
</dbReference>
<dbReference type="ComplexPortal" id="CPX-1497">
    <property type="entry name" value="SCF(COI1) ubiquitin ligase complex, variant CUL2-RBX1B-ASK6"/>
</dbReference>
<dbReference type="ComplexPortal" id="CPX-1498">
    <property type="entry name" value="SCF(COI1) ubiquitin ligase complex, variant CUL2-RBX1B-ASK7"/>
</dbReference>
<dbReference type="ComplexPortal" id="CPX-1499">
    <property type="entry name" value="SCF(COI1) ubiquitin ligase complex, variant CUL2-RBX1B-ASK8"/>
</dbReference>
<dbReference type="ComplexPortal" id="CPX-1502">
    <property type="entry name" value="SCF(COI1) ubiquitin ligase complex, variant CUL2-RBX1B-ASK9"/>
</dbReference>
<dbReference type="ComplexPortal" id="CPX-1503">
    <property type="entry name" value="SCF(COI1) ubiquitin ligase complex, variant CUL2-RBX1B-ASK10"/>
</dbReference>
<dbReference type="ComplexPortal" id="CPX-1504">
    <property type="entry name" value="SCF(COI1) ubiquitin ligase complex, variant CUL2-RBX1B-ASK11"/>
</dbReference>
<dbReference type="ComplexPortal" id="CPX-1505">
    <property type="entry name" value="SCF(COI1) ubiquitin ligase complex, variant CUL2-RBX1B-ASK12"/>
</dbReference>
<dbReference type="ComplexPortal" id="CPX-1506">
    <property type="entry name" value="SCF(COI1) ubiquitin ligase complex, variant CUL2-RBX1B-ASK13"/>
</dbReference>
<dbReference type="ComplexPortal" id="CPX-1507">
    <property type="entry name" value="SCF(COI1) ubiquitin ligase complex, variant CUL2-RBX1B-ASK14"/>
</dbReference>
<dbReference type="ComplexPortal" id="CPX-1508">
    <property type="entry name" value="SCF(COI1) ubiquitin ligase complex, variant CUL2-RBX1B-ASK15"/>
</dbReference>
<dbReference type="ComplexPortal" id="CPX-1509">
    <property type="entry name" value="SCF(COI1) ubiquitin ligase complex, variant CUL2-RBX1B-ASK16"/>
</dbReference>
<dbReference type="ComplexPortal" id="CPX-1510">
    <property type="entry name" value="SCF(COI1) ubiquitin ligase complex, variant CUL2-RBX1B-ASK17"/>
</dbReference>
<dbReference type="ComplexPortal" id="CPX-1511">
    <property type="entry name" value="SCF(COI1) ubiquitin ligase complex, variant CUL2-RBX1B-ASK18"/>
</dbReference>
<dbReference type="ComplexPortal" id="CPX-1512">
    <property type="entry name" value="SCF(COI1) ubiquitin ligase complex, variant CUL2-RBX1B-ASK19"/>
</dbReference>
<dbReference type="ComplexPortal" id="CPX-1513">
    <property type="entry name" value="SCF(COI1) ubiquitin ligase complex, variant CUL2-RBX1B-ASK20"/>
</dbReference>
<dbReference type="ComplexPortal" id="CPX-1514">
    <property type="entry name" value="SCF(COI1) ubiquitin ligase complex, variant CUL2-RBX1B-ASK21"/>
</dbReference>
<dbReference type="ComplexPortal" id="CPX-1557">
    <property type="entry name" value="SCF(TIR1) ubiquitin ligase complex, variant CUL2-RBX1A-SKP1A"/>
</dbReference>
<dbReference type="ComplexPortal" id="CPX-1558">
    <property type="entry name" value="SCF(TIR1) ubiquitin ligase complex, variant CUL2-RBX1A-SKP1B"/>
</dbReference>
<dbReference type="ComplexPortal" id="CPX-1559">
    <property type="entry name" value="SCF(TIR1) ubiquitin ligase complex, variant CUL2-RBX1A-ASK3"/>
</dbReference>
<dbReference type="ComplexPortal" id="CPX-1560">
    <property type="entry name" value="SCF(TIR1) ubiquitin ligase complex, variant CUL2-RBX1A-ASK4"/>
</dbReference>
<dbReference type="ComplexPortal" id="CPX-1561">
    <property type="entry name" value="SCF(TIR1) ubiquitin ligase complex, variant CUL2-RBX1A-ASK5"/>
</dbReference>
<dbReference type="ComplexPortal" id="CPX-1562">
    <property type="entry name" value="SCF(TIR1) ubiquitin ligase complex, variant CUL2-RBX1A-ASK6"/>
</dbReference>
<dbReference type="ComplexPortal" id="CPX-1563">
    <property type="entry name" value="SCF(TIR1) ubiquitin ligase complex, variant CUL2-RBX1A-ASK7"/>
</dbReference>
<dbReference type="ComplexPortal" id="CPX-1564">
    <property type="entry name" value="SCF(TIR1) ubiquitin ligase complex, variant CUL2-RBX1A-ASK8"/>
</dbReference>
<dbReference type="ComplexPortal" id="CPX-1565">
    <property type="entry name" value="SCF(TIR1) ubiquitin ligase complex, variant CUL2-RBX1A-ASK9"/>
</dbReference>
<dbReference type="ComplexPortal" id="CPX-1566">
    <property type="entry name" value="SCF(TIR1) ubiquitin ligase complex, variant CUL2-RBX1A-ASK10"/>
</dbReference>
<dbReference type="ComplexPortal" id="CPX-1567">
    <property type="entry name" value="SCF(TIR1) ubiquitin ligase complex, variant CUL2-RBX1A-ASK11"/>
</dbReference>
<dbReference type="ComplexPortal" id="CPX-1568">
    <property type="entry name" value="SCF(TIR1) ubiquitin ligase complex, variant CUL2-RBX1A-ASK12"/>
</dbReference>
<dbReference type="ComplexPortal" id="CPX-1569">
    <property type="entry name" value="SCF(TIR1) ubiquitin ligase complex, variant CUL2-RBX1A-ASK13"/>
</dbReference>
<dbReference type="ComplexPortal" id="CPX-1570">
    <property type="entry name" value="SCF(TIR1) ubiquitin ligase complex, variant CUL2-RBX1A-ASK14"/>
</dbReference>
<dbReference type="ComplexPortal" id="CPX-1571">
    <property type="entry name" value="SCF(TIR1) ubiquitin ligase complex, variant CUL2-RBX1A-ASK15"/>
</dbReference>
<dbReference type="ComplexPortal" id="CPX-1572">
    <property type="entry name" value="SCF(TIR1) ubiquitin ligase complex, variant CUL2-RBX1A-ASK16"/>
</dbReference>
<dbReference type="ComplexPortal" id="CPX-1573">
    <property type="entry name" value="SCF(TIR1) ubiquitin ligase complex, variant CUL2-RBX1A-ASK17"/>
</dbReference>
<dbReference type="ComplexPortal" id="CPX-1574">
    <property type="entry name" value="SCF(TIR1) ubiquitin ligase complex, variant CUL2-RBX1A-ASK18"/>
</dbReference>
<dbReference type="ComplexPortal" id="CPX-1575">
    <property type="entry name" value="SCF(TIR1) ubiquitin ligase complex, variant CUL2-RBX1A-ASK19"/>
</dbReference>
<dbReference type="ComplexPortal" id="CPX-1576">
    <property type="entry name" value="SCF(TIR1) ubiquitin ligase complex, variant CUL2-RBX1A-ASK20"/>
</dbReference>
<dbReference type="ComplexPortal" id="CPX-1577">
    <property type="entry name" value="SCF(TIR1) ubiquitin ligase complex, variant CUL2-RBX1A-ASK21"/>
</dbReference>
<dbReference type="ComplexPortal" id="CPX-1578">
    <property type="entry name" value="SCF(TIR1) ubiquitin ligase complex, variant CUL2-RBX1B-SKP1A"/>
</dbReference>
<dbReference type="ComplexPortal" id="CPX-1579">
    <property type="entry name" value="SCF(TIR1) ubiquitin ligase complex, variant CUL2-RBX1B-SKP1B"/>
</dbReference>
<dbReference type="ComplexPortal" id="CPX-1580">
    <property type="entry name" value="SCF(TIR1) ubiquitin ligase complex, variant CUL2-RBX1B-ASK3"/>
</dbReference>
<dbReference type="ComplexPortal" id="CPX-1581">
    <property type="entry name" value="SCF(TIR1) ubiquitin ligase complex, variant CUL2-RBX1B-ASK4"/>
</dbReference>
<dbReference type="ComplexPortal" id="CPX-1582">
    <property type="entry name" value="SCF(TIR1) ubiquitin ligase complex, variant CUL2-RBX1B-ASK5"/>
</dbReference>
<dbReference type="ComplexPortal" id="CPX-1583">
    <property type="entry name" value="SCF(TIR1) ubiquitin ligase complex, variant CUL2-RBX1B-ASK6"/>
</dbReference>
<dbReference type="ComplexPortal" id="CPX-1584">
    <property type="entry name" value="SCF(TIR1) ubiquitin ligase complex, variant CUL2-RBX1B-ASK7"/>
</dbReference>
<dbReference type="ComplexPortal" id="CPX-1585">
    <property type="entry name" value="SCF(TIR1) ubiquitin ligase complex, variant CUL2-RBX1B-ASK8"/>
</dbReference>
<dbReference type="ComplexPortal" id="CPX-1586">
    <property type="entry name" value="SCF(TIR1) ubiquitin ligase complex, variant CUL2-RBX1B-ASK9"/>
</dbReference>
<dbReference type="ComplexPortal" id="CPX-1587">
    <property type="entry name" value="SCF(TIR1) ubiquitin ligase complex, variant CUL2-RBX1B-ASK10"/>
</dbReference>
<dbReference type="ComplexPortal" id="CPX-1588">
    <property type="entry name" value="SCF(TIR1) ubiquitin ligase complex, variant CUL2-RBX1B-ASK11"/>
</dbReference>
<dbReference type="ComplexPortal" id="CPX-1589">
    <property type="entry name" value="SCF(TIR1) ubiquitin ligase complex, variant CUL2-RBX1B-ASK12"/>
</dbReference>
<dbReference type="ComplexPortal" id="CPX-1590">
    <property type="entry name" value="SCF(TIR1) ubiquitin ligase complex, variant CUL2-RBX1B-ASK13"/>
</dbReference>
<dbReference type="ComplexPortal" id="CPX-1591">
    <property type="entry name" value="SCF(TIR1) ubiquitin ligase complex, variant CUL2-RBX1B-ASK14"/>
</dbReference>
<dbReference type="ComplexPortal" id="CPX-1592">
    <property type="entry name" value="SCF(TIR1) ubiquitin ligase complex, variant CUL2-RBX1B-ASK15"/>
</dbReference>
<dbReference type="ComplexPortal" id="CPX-1593">
    <property type="entry name" value="SCF(TIR1) ubiquitin ligase complex, variant CUL2-RBX1B-ASK16"/>
</dbReference>
<dbReference type="ComplexPortal" id="CPX-1594">
    <property type="entry name" value="SCF(TIR1) ubiquitin ligase complex, variant CUL2-RBX1B-ASK17"/>
</dbReference>
<dbReference type="ComplexPortal" id="CPX-1595">
    <property type="entry name" value="SCF(TIR1) ubiquitin ligase complex, variant CUL2-RBX1B-ASK18"/>
</dbReference>
<dbReference type="ComplexPortal" id="CPX-1596">
    <property type="entry name" value="SCF(TIR1) ubiquitin ligase complex, variant CUL2-RBX1B-ASK19"/>
</dbReference>
<dbReference type="ComplexPortal" id="CPX-1597">
    <property type="entry name" value="SCF(TIR1) ubiquitin ligase complex, variant CUL2-RBX1B-ASK20"/>
</dbReference>
<dbReference type="ComplexPortal" id="CPX-1598">
    <property type="entry name" value="SCF(TIR1) ubiquitin ligase complex, variant CUL2-RBX1B-ASK21"/>
</dbReference>
<dbReference type="FunCoup" id="Q9SRZ0">
    <property type="interactions" value="91"/>
</dbReference>
<dbReference type="STRING" id="3702.Q9SRZ0"/>
<dbReference type="iPTMnet" id="Q9SRZ0"/>
<dbReference type="PaxDb" id="3702-AT1G02980.1"/>
<dbReference type="ProteomicsDB" id="220461"/>
<dbReference type="EnsemblPlants" id="AT1G02980.1">
    <property type="protein sequence ID" value="AT1G02980.1"/>
    <property type="gene ID" value="AT1G02980"/>
</dbReference>
<dbReference type="EnsemblPlants" id="AT1G02980.2">
    <property type="protein sequence ID" value="AT1G02980.2"/>
    <property type="gene ID" value="AT1G02980"/>
</dbReference>
<dbReference type="GeneID" id="839415"/>
<dbReference type="Gramene" id="AT1G02980.1">
    <property type="protein sequence ID" value="AT1G02980.1"/>
    <property type="gene ID" value="AT1G02980"/>
</dbReference>
<dbReference type="Gramene" id="AT1G02980.2">
    <property type="protein sequence ID" value="AT1G02980.2"/>
    <property type="gene ID" value="AT1G02980"/>
</dbReference>
<dbReference type="KEGG" id="ath:AT1G02980"/>
<dbReference type="Araport" id="AT1G02980"/>
<dbReference type="TAIR" id="AT1G02980">
    <property type="gene designation" value="CUL2"/>
</dbReference>
<dbReference type="eggNOG" id="KOG2166">
    <property type="taxonomic scope" value="Eukaryota"/>
</dbReference>
<dbReference type="HOGENOM" id="CLU_004747_3_0_1"/>
<dbReference type="InParanoid" id="Q9SRZ0"/>
<dbReference type="OMA" id="NCAYHEA"/>
<dbReference type="PhylomeDB" id="Q9SRZ0"/>
<dbReference type="PRO" id="PR:Q9SRZ0"/>
<dbReference type="Proteomes" id="UP000006548">
    <property type="component" value="Chromosome 1"/>
</dbReference>
<dbReference type="ExpressionAtlas" id="Q9SRZ0">
    <property type="expression patterns" value="baseline and differential"/>
</dbReference>
<dbReference type="GO" id="GO:0009941">
    <property type="term" value="C:chloroplast envelope"/>
    <property type="evidence" value="ECO:0007005"/>
    <property type="project" value="TAIR"/>
</dbReference>
<dbReference type="GO" id="GO:0019005">
    <property type="term" value="C:SCF ubiquitin ligase complex"/>
    <property type="evidence" value="ECO:0000250"/>
    <property type="project" value="TAIR"/>
</dbReference>
<dbReference type="GO" id="GO:0031625">
    <property type="term" value="F:ubiquitin protein ligase binding"/>
    <property type="evidence" value="ECO:0007669"/>
    <property type="project" value="InterPro"/>
</dbReference>
<dbReference type="GO" id="GO:0009734">
    <property type="term" value="P:auxin-activated signaling pathway"/>
    <property type="evidence" value="ECO:0000303"/>
    <property type="project" value="ComplexPortal"/>
</dbReference>
<dbReference type="GO" id="GO:0009867">
    <property type="term" value="P:jasmonic acid mediated signaling pathway"/>
    <property type="evidence" value="ECO:0000315"/>
    <property type="project" value="ComplexPortal"/>
</dbReference>
<dbReference type="GO" id="GO:0009733">
    <property type="term" value="P:response to auxin"/>
    <property type="evidence" value="ECO:0000303"/>
    <property type="project" value="ComplexPortal"/>
</dbReference>
<dbReference type="GO" id="GO:0009753">
    <property type="term" value="P:response to jasmonic acid"/>
    <property type="evidence" value="ECO:0000315"/>
    <property type="project" value="ComplexPortal"/>
</dbReference>
<dbReference type="GO" id="GO:0006511">
    <property type="term" value="P:ubiquitin-dependent protein catabolic process"/>
    <property type="evidence" value="ECO:0007669"/>
    <property type="project" value="InterPro"/>
</dbReference>
<dbReference type="FunFam" id="1.20.1310.10:FF:000001">
    <property type="entry name" value="Cullin 3"/>
    <property type="match status" value="1"/>
</dbReference>
<dbReference type="FunFam" id="1.10.10.10:FF:000503">
    <property type="entry name" value="Cullin-1"/>
    <property type="match status" value="1"/>
</dbReference>
<dbReference type="FunFam" id="1.20.1310.10:FF:000013">
    <property type="entry name" value="Cullin-1 like"/>
    <property type="match status" value="1"/>
</dbReference>
<dbReference type="FunFam" id="1.20.1310.10:FF:000020">
    <property type="entry name" value="Cullin-1, putative"/>
    <property type="match status" value="1"/>
</dbReference>
<dbReference type="FunFam" id="1.20.1310.10:FF:000021">
    <property type="entry name" value="Cullin-1, putative"/>
    <property type="match status" value="1"/>
</dbReference>
<dbReference type="Gene3D" id="1.20.1310.10">
    <property type="entry name" value="Cullin Repeats"/>
    <property type="match status" value="4"/>
</dbReference>
<dbReference type="Gene3D" id="3.30.230.130">
    <property type="entry name" value="Cullin, Chain C, Domain 2"/>
    <property type="match status" value="1"/>
</dbReference>
<dbReference type="Gene3D" id="1.10.10.10">
    <property type="entry name" value="Winged helix-like DNA-binding domain superfamily/Winged helix DNA-binding domain"/>
    <property type="match status" value="1"/>
</dbReference>
<dbReference type="InterPro" id="IPR045093">
    <property type="entry name" value="Cullin"/>
</dbReference>
<dbReference type="InterPro" id="IPR016158">
    <property type="entry name" value="Cullin_homology"/>
</dbReference>
<dbReference type="InterPro" id="IPR036317">
    <property type="entry name" value="Cullin_homology_sf"/>
</dbReference>
<dbReference type="InterPro" id="IPR001373">
    <property type="entry name" value="Cullin_N"/>
</dbReference>
<dbReference type="InterPro" id="IPR019559">
    <property type="entry name" value="Cullin_neddylation_domain"/>
</dbReference>
<dbReference type="InterPro" id="IPR016159">
    <property type="entry name" value="Cullin_repeat-like_dom_sf"/>
</dbReference>
<dbReference type="InterPro" id="IPR036388">
    <property type="entry name" value="WH-like_DNA-bd_sf"/>
</dbReference>
<dbReference type="InterPro" id="IPR036390">
    <property type="entry name" value="WH_DNA-bd_sf"/>
</dbReference>
<dbReference type="PANTHER" id="PTHR11932">
    <property type="entry name" value="CULLIN"/>
    <property type="match status" value="1"/>
</dbReference>
<dbReference type="Pfam" id="PF00888">
    <property type="entry name" value="Cullin"/>
    <property type="match status" value="1"/>
</dbReference>
<dbReference type="Pfam" id="PF10557">
    <property type="entry name" value="Cullin_Nedd8"/>
    <property type="match status" value="1"/>
</dbReference>
<dbReference type="SMART" id="SM00182">
    <property type="entry name" value="CULLIN"/>
    <property type="match status" value="1"/>
</dbReference>
<dbReference type="SMART" id="SM00884">
    <property type="entry name" value="Cullin_Nedd8"/>
    <property type="match status" value="1"/>
</dbReference>
<dbReference type="SUPFAM" id="SSF75632">
    <property type="entry name" value="Cullin homology domain"/>
    <property type="match status" value="1"/>
</dbReference>
<dbReference type="SUPFAM" id="SSF74788">
    <property type="entry name" value="Cullin repeat-like"/>
    <property type="match status" value="1"/>
</dbReference>
<dbReference type="SUPFAM" id="SSF46785">
    <property type="entry name" value="Winged helix' DNA-binding domain"/>
    <property type="match status" value="1"/>
</dbReference>
<dbReference type="PROSITE" id="PS50069">
    <property type="entry name" value="CULLIN_2"/>
    <property type="match status" value="1"/>
</dbReference>
<gene>
    <name type="primary">CUL2</name>
    <name type="ordered locus">At1g02980</name>
    <name type="ORF">F22D16.2</name>
</gene>